<organism>
    <name type="scientific">Mesorhizobium japonicum (strain LMG 29417 / CECT 9101 / MAFF 303099)</name>
    <name type="common">Mesorhizobium loti (strain MAFF 303099)</name>
    <dbReference type="NCBI Taxonomy" id="266835"/>
    <lineage>
        <taxon>Bacteria</taxon>
        <taxon>Pseudomonadati</taxon>
        <taxon>Pseudomonadota</taxon>
        <taxon>Alphaproteobacteria</taxon>
        <taxon>Hyphomicrobiales</taxon>
        <taxon>Phyllobacteriaceae</taxon>
        <taxon>Mesorhizobium</taxon>
    </lineage>
</organism>
<feature type="chain" id="PRO_0000124746" description="Membrane protein insertase YidC">
    <location>
        <begin position="1"/>
        <end position="603"/>
    </location>
</feature>
<feature type="transmembrane region" description="Helical" evidence="1">
    <location>
        <begin position="7"/>
        <end position="27"/>
    </location>
</feature>
<feature type="transmembrane region" description="Helical" evidence="1">
    <location>
        <begin position="352"/>
        <end position="372"/>
    </location>
</feature>
<feature type="transmembrane region" description="Helical" evidence="1">
    <location>
        <begin position="378"/>
        <end position="398"/>
    </location>
</feature>
<feature type="transmembrane region" description="Helical" evidence="1">
    <location>
        <begin position="452"/>
        <end position="472"/>
    </location>
</feature>
<feature type="transmembrane region" description="Helical" evidence="1">
    <location>
        <begin position="497"/>
        <end position="517"/>
    </location>
</feature>
<feature type="transmembrane region" description="Helical" evidence="1">
    <location>
        <begin position="540"/>
        <end position="560"/>
    </location>
</feature>
<feature type="region of interest" description="Disordered" evidence="2">
    <location>
        <begin position="38"/>
        <end position="76"/>
    </location>
</feature>
<feature type="compositionally biased region" description="Basic and acidic residues" evidence="2">
    <location>
        <begin position="38"/>
        <end position="51"/>
    </location>
</feature>
<feature type="compositionally biased region" description="Low complexity" evidence="2">
    <location>
        <begin position="52"/>
        <end position="74"/>
    </location>
</feature>
<proteinExistence type="inferred from homology"/>
<comment type="function">
    <text evidence="1">Required for the insertion and/or proper folding and/or complex formation of integral membrane proteins into the membrane. Involved in integration of membrane proteins that insert both dependently and independently of the Sec translocase complex, as well as at least some lipoproteins. Aids folding of multispanning membrane proteins.</text>
</comment>
<comment type="subunit">
    <text evidence="1">Interacts with the Sec translocase complex via SecD. Specifically interacts with transmembrane segments of nascent integral membrane proteins during membrane integration.</text>
</comment>
<comment type="subcellular location">
    <subcellularLocation>
        <location evidence="1">Cell inner membrane</location>
        <topology evidence="1">Multi-pass membrane protein</topology>
    </subcellularLocation>
</comment>
<comment type="similarity">
    <text evidence="1">Belongs to the OXA1/ALB3/YidC family. Type 1 subfamily.</text>
</comment>
<keyword id="KW-0997">Cell inner membrane</keyword>
<keyword id="KW-1003">Cell membrane</keyword>
<keyword id="KW-0143">Chaperone</keyword>
<keyword id="KW-0472">Membrane</keyword>
<keyword id="KW-0653">Protein transport</keyword>
<keyword id="KW-0812">Transmembrane</keyword>
<keyword id="KW-1133">Transmembrane helix</keyword>
<keyword id="KW-0813">Transport</keyword>
<dbReference type="EMBL" id="BA000012">
    <property type="protein sequence ID" value="BAB51383.1"/>
    <property type="molecule type" value="Genomic_DNA"/>
</dbReference>
<dbReference type="RefSeq" id="WP_010912724.1">
    <property type="nucleotide sequence ID" value="NC_002678.2"/>
</dbReference>
<dbReference type="SMR" id="Q98D88"/>
<dbReference type="KEGG" id="mlo:mlr4812"/>
<dbReference type="PATRIC" id="fig|266835.9.peg.3799"/>
<dbReference type="eggNOG" id="COG0706">
    <property type="taxonomic scope" value="Bacteria"/>
</dbReference>
<dbReference type="HOGENOM" id="CLU_016535_1_0_5"/>
<dbReference type="Proteomes" id="UP000000552">
    <property type="component" value="Chromosome"/>
</dbReference>
<dbReference type="GO" id="GO:0005886">
    <property type="term" value="C:plasma membrane"/>
    <property type="evidence" value="ECO:0007669"/>
    <property type="project" value="UniProtKB-SubCell"/>
</dbReference>
<dbReference type="GO" id="GO:0032977">
    <property type="term" value="F:membrane insertase activity"/>
    <property type="evidence" value="ECO:0007669"/>
    <property type="project" value="InterPro"/>
</dbReference>
<dbReference type="GO" id="GO:0051205">
    <property type="term" value="P:protein insertion into membrane"/>
    <property type="evidence" value="ECO:0007669"/>
    <property type="project" value="TreeGrafter"/>
</dbReference>
<dbReference type="GO" id="GO:0015031">
    <property type="term" value="P:protein transport"/>
    <property type="evidence" value="ECO:0007669"/>
    <property type="project" value="UniProtKB-KW"/>
</dbReference>
<dbReference type="CDD" id="cd20070">
    <property type="entry name" value="5TM_YidC_Alb3"/>
    <property type="match status" value="1"/>
</dbReference>
<dbReference type="CDD" id="cd19961">
    <property type="entry name" value="EcYidC-like_peri"/>
    <property type="match status" value="1"/>
</dbReference>
<dbReference type="Gene3D" id="2.70.98.90">
    <property type="match status" value="1"/>
</dbReference>
<dbReference type="HAMAP" id="MF_01810">
    <property type="entry name" value="YidC_type1"/>
    <property type="match status" value="1"/>
</dbReference>
<dbReference type="InterPro" id="IPR019998">
    <property type="entry name" value="Membr_insert_YidC"/>
</dbReference>
<dbReference type="InterPro" id="IPR028053">
    <property type="entry name" value="Membr_insert_YidC_N"/>
</dbReference>
<dbReference type="InterPro" id="IPR001708">
    <property type="entry name" value="YidC/ALB3/OXA1/COX18"/>
</dbReference>
<dbReference type="InterPro" id="IPR028055">
    <property type="entry name" value="YidC/Oxa/ALB_C"/>
</dbReference>
<dbReference type="InterPro" id="IPR047196">
    <property type="entry name" value="YidC_ALB_C"/>
</dbReference>
<dbReference type="InterPro" id="IPR038221">
    <property type="entry name" value="YidC_periplasmic_sf"/>
</dbReference>
<dbReference type="NCBIfam" id="NF002353">
    <property type="entry name" value="PRK01318.1-4"/>
    <property type="match status" value="1"/>
</dbReference>
<dbReference type="NCBIfam" id="TIGR03593">
    <property type="entry name" value="yidC_nterm"/>
    <property type="match status" value="1"/>
</dbReference>
<dbReference type="NCBIfam" id="TIGR03592">
    <property type="entry name" value="yidC_oxa1_cterm"/>
    <property type="match status" value="1"/>
</dbReference>
<dbReference type="PANTHER" id="PTHR12428:SF65">
    <property type="entry name" value="CYTOCHROME C OXIDASE ASSEMBLY PROTEIN COX18, MITOCHONDRIAL"/>
    <property type="match status" value="1"/>
</dbReference>
<dbReference type="PANTHER" id="PTHR12428">
    <property type="entry name" value="OXA1"/>
    <property type="match status" value="1"/>
</dbReference>
<dbReference type="Pfam" id="PF02096">
    <property type="entry name" value="60KD_IMP"/>
    <property type="match status" value="1"/>
</dbReference>
<dbReference type="Pfam" id="PF14849">
    <property type="entry name" value="YidC_periplas"/>
    <property type="match status" value="1"/>
</dbReference>
<dbReference type="PRINTS" id="PR00701">
    <property type="entry name" value="60KDINNERMP"/>
</dbReference>
<dbReference type="PRINTS" id="PR01900">
    <property type="entry name" value="YIDCPROTEIN"/>
</dbReference>
<evidence type="ECO:0000255" key="1">
    <source>
        <dbReference type="HAMAP-Rule" id="MF_01810"/>
    </source>
</evidence>
<evidence type="ECO:0000256" key="2">
    <source>
        <dbReference type="SAM" id="MobiDB-lite"/>
    </source>
</evidence>
<accession>Q98D88</accession>
<name>YIDC_RHILO</name>
<protein>
    <recommendedName>
        <fullName evidence="1">Membrane protein insertase YidC</fullName>
    </recommendedName>
    <alternativeName>
        <fullName evidence="1">Foldase YidC</fullName>
    </alternativeName>
    <alternativeName>
        <fullName evidence="1">Membrane integrase YidC</fullName>
    </alternativeName>
    <alternativeName>
        <fullName evidence="1">Membrane protein YidC</fullName>
    </alternativeName>
</protein>
<sequence length="603" mass="67511">MENNRNFFITIALSVLILAVWQYFYVLPRSEAQREAARVEQQRVEEQKKAAEAANPGAGTPAPAPGTIPNAPGGDTVTVAGRDQALAASKRVKIDTPSLEGSINLTGARLDDLKLKHYTETVDKNSPEIELLNPQALPTGYFAEIGFVGNDKTGAVPGAETVWNVDGNPTLSPSTPVTLTYTNDKGLTFKRTFSVDANYMFTVSDTVQNSGSSAVSLFNYGRVTRYDKPAVASTYVLHEGLIGFTGTEGLQEHKYASIEKDKQYQPGKATDGWLGITDKYWAVTLVPTEKQPFQPRYAFFEDGRHRYQSDFLTDAINVEAGQSATVETEVFAGAKEVAKINAYAEDRHIKRFDLLIDWGWFHFITKPMFWLIDTLYKFLGNFGLAILATTVIVKALFFPLANKSYASMANMKKVQPKMLEIREKYADDKMKQQQAMMELYKTEKINPLAGCWPVALQIPVFFSLYKVLYITIEMRHAPFFGWIQDLAAPDPTSLFNLFGLIPVTLPHMLMIGVWPLIMGVTMFLQMRMNPTPPDPTQAAIFTWMPVIFTFMMAGFPAGLVIYWAWNNMLSILQQGVIMKRQGAKIELWDNLMALFKKKPSPAE</sequence>
<reference key="1">
    <citation type="journal article" date="2000" name="DNA Res.">
        <title>Complete genome structure of the nitrogen-fixing symbiotic bacterium Mesorhizobium loti.</title>
        <authorList>
            <person name="Kaneko T."/>
            <person name="Nakamura Y."/>
            <person name="Sato S."/>
            <person name="Asamizu E."/>
            <person name="Kato T."/>
            <person name="Sasamoto S."/>
            <person name="Watanabe A."/>
            <person name="Idesawa K."/>
            <person name="Ishikawa A."/>
            <person name="Kawashima K."/>
            <person name="Kimura T."/>
            <person name="Kishida Y."/>
            <person name="Kiyokawa C."/>
            <person name="Kohara M."/>
            <person name="Matsumoto M."/>
            <person name="Matsuno A."/>
            <person name="Mochizuki Y."/>
            <person name="Nakayama S."/>
            <person name="Nakazaki N."/>
            <person name="Shimpo S."/>
            <person name="Sugimoto M."/>
            <person name="Takeuchi C."/>
            <person name="Yamada M."/>
            <person name="Tabata S."/>
        </authorList>
    </citation>
    <scope>NUCLEOTIDE SEQUENCE [LARGE SCALE GENOMIC DNA]</scope>
    <source>
        <strain>LMG 29417 / CECT 9101 / MAFF 303099</strain>
    </source>
</reference>
<gene>
    <name evidence="1" type="primary">yidC</name>
    <name type="ordered locus">mlr4812</name>
</gene>